<proteinExistence type="inferred from homology"/>
<organism>
    <name type="scientific">Phocaeicola vulgatus (strain ATCC 8482 / DSM 1447 / JCM 5826 / CCUG 4940 / NBRC 14291 / NCTC 11154)</name>
    <name type="common">Bacteroides vulgatus</name>
    <dbReference type="NCBI Taxonomy" id="435590"/>
    <lineage>
        <taxon>Bacteria</taxon>
        <taxon>Pseudomonadati</taxon>
        <taxon>Bacteroidota</taxon>
        <taxon>Bacteroidia</taxon>
        <taxon>Bacteroidales</taxon>
        <taxon>Bacteroidaceae</taxon>
        <taxon>Phocaeicola</taxon>
    </lineage>
</organism>
<sequence>MEENFDIREQQLTTKERDFENALRPLNFEDFSGQDKVVDNLRIFVKAARLRAEALDHVLLHGPPGLGKTTLSNIIANELGVGFKVTSGPVLDKPGDLAGVLTSLEPNDVLFIDEIHRLSPVVEEYLYSAMEDYRIDIMIDKGPSARSIQLELSPFTLVGATTRSGLLTAPLRARFGINLHLEYYDDDVLTSIIRRSATILNVPCDVKAAGEIASRSRGTPRIANALLRRVRDFAQVKGSGRIDVEIARFALEALNIDRYGLDEIDNKILCTIIDKFKGGPVGLTTIATALGEDAGTIEEVYEPFLIKEGFLKRTPRGREVTELAYMHLGRSIYNSQKTLFDD</sequence>
<evidence type="ECO:0000255" key="1">
    <source>
        <dbReference type="HAMAP-Rule" id="MF_00016"/>
    </source>
</evidence>
<gene>
    <name evidence="1" type="primary">ruvB</name>
    <name type="ordered locus">BVU_1289</name>
</gene>
<keyword id="KW-0067">ATP-binding</keyword>
<keyword id="KW-0963">Cytoplasm</keyword>
<keyword id="KW-0227">DNA damage</keyword>
<keyword id="KW-0233">DNA recombination</keyword>
<keyword id="KW-0234">DNA repair</keyword>
<keyword id="KW-0238">DNA-binding</keyword>
<keyword id="KW-0378">Hydrolase</keyword>
<keyword id="KW-0547">Nucleotide-binding</keyword>
<dbReference type="EC" id="3.6.4.-" evidence="1"/>
<dbReference type="EMBL" id="CP000139">
    <property type="protein sequence ID" value="ABR38979.1"/>
    <property type="molecule type" value="Genomic_DNA"/>
</dbReference>
<dbReference type="RefSeq" id="WP_005838742.1">
    <property type="nucleotide sequence ID" value="NZ_CAXVNH010000037.1"/>
</dbReference>
<dbReference type="SMR" id="A6KZW5"/>
<dbReference type="STRING" id="435590.BVU_1289"/>
<dbReference type="PaxDb" id="435590-BVU_1289"/>
<dbReference type="GeneID" id="5302255"/>
<dbReference type="KEGG" id="bvu:BVU_1289"/>
<dbReference type="eggNOG" id="COG2255">
    <property type="taxonomic scope" value="Bacteria"/>
</dbReference>
<dbReference type="HOGENOM" id="CLU_055599_1_0_10"/>
<dbReference type="BioCyc" id="BVUL435590:G1G59-1344-MONOMER"/>
<dbReference type="Proteomes" id="UP000002861">
    <property type="component" value="Chromosome"/>
</dbReference>
<dbReference type="GO" id="GO:0005737">
    <property type="term" value="C:cytoplasm"/>
    <property type="evidence" value="ECO:0007669"/>
    <property type="project" value="UniProtKB-SubCell"/>
</dbReference>
<dbReference type="GO" id="GO:0048476">
    <property type="term" value="C:Holliday junction resolvase complex"/>
    <property type="evidence" value="ECO:0007669"/>
    <property type="project" value="UniProtKB-UniRule"/>
</dbReference>
<dbReference type="GO" id="GO:0005524">
    <property type="term" value="F:ATP binding"/>
    <property type="evidence" value="ECO:0007669"/>
    <property type="project" value="UniProtKB-UniRule"/>
</dbReference>
<dbReference type="GO" id="GO:0016887">
    <property type="term" value="F:ATP hydrolysis activity"/>
    <property type="evidence" value="ECO:0007669"/>
    <property type="project" value="InterPro"/>
</dbReference>
<dbReference type="GO" id="GO:0000400">
    <property type="term" value="F:four-way junction DNA binding"/>
    <property type="evidence" value="ECO:0007669"/>
    <property type="project" value="UniProtKB-UniRule"/>
</dbReference>
<dbReference type="GO" id="GO:0009378">
    <property type="term" value="F:four-way junction helicase activity"/>
    <property type="evidence" value="ECO:0007669"/>
    <property type="project" value="InterPro"/>
</dbReference>
<dbReference type="GO" id="GO:0006310">
    <property type="term" value="P:DNA recombination"/>
    <property type="evidence" value="ECO:0007669"/>
    <property type="project" value="UniProtKB-UniRule"/>
</dbReference>
<dbReference type="GO" id="GO:0006281">
    <property type="term" value="P:DNA repair"/>
    <property type="evidence" value="ECO:0007669"/>
    <property type="project" value="UniProtKB-UniRule"/>
</dbReference>
<dbReference type="CDD" id="cd00009">
    <property type="entry name" value="AAA"/>
    <property type="match status" value="1"/>
</dbReference>
<dbReference type="Gene3D" id="1.10.8.60">
    <property type="match status" value="1"/>
</dbReference>
<dbReference type="Gene3D" id="3.40.50.300">
    <property type="entry name" value="P-loop containing nucleotide triphosphate hydrolases"/>
    <property type="match status" value="1"/>
</dbReference>
<dbReference type="Gene3D" id="1.10.10.10">
    <property type="entry name" value="Winged helix-like DNA-binding domain superfamily/Winged helix DNA-binding domain"/>
    <property type="match status" value="1"/>
</dbReference>
<dbReference type="HAMAP" id="MF_00016">
    <property type="entry name" value="DNA_HJ_migration_RuvB"/>
    <property type="match status" value="1"/>
</dbReference>
<dbReference type="InterPro" id="IPR003593">
    <property type="entry name" value="AAA+_ATPase"/>
</dbReference>
<dbReference type="InterPro" id="IPR041445">
    <property type="entry name" value="AAA_lid_4"/>
</dbReference>
<dbReference type="InterPro" id="IPR004605">
    <property type="entry name" value="DNA_helicase_Holl-junc_RuvB"/>
</dbReference>
<dbReference type="InterPro" id="IPR027417">
    <property type="entry name" value="P-loop_NTPase"/>
</dbReference>
<dbReference type="InterPro" id="IPR008824">
    <property type="entry name" value="RuvB-like_N"/>
</dbReference>
<dbReference type="InterPro" id="IPR008823">
    <property type="entry name" value="RuvB_C"/>
</dbReference>
<dbReference type="InterPro" id="IPR036388">
    <property type="entry name" value="WH-like_DNA-bd_sf"/>
</dbReference>
<dbReference type="InterPro" id="IPR036390">
    <property type="entry name" value="WH_DNA-bd_sf"/>
</dbReference>
<dbReference type="NCBIfam" id="NF000868">
    <property type="entry name" value="PRK00080.1"/>
    <property type="match status" value="1"/>
</dbReference>
<dbReference type="NCBIfam" id="TIGR00635">
    <property type="entry name" value="ruvB"/>
    <property type="match status" value="1"/>
</dbReference>
<dbReference type="PANTHER" id="PTHR42848">
    <property type="match status" value="1"/>
</dbReference>
<dbReference type="PANTHER" id="PTHR42848:SF1">
    <property type="entry name" value="HOLLIDAY JUNCTION BRANCH MIGRATION COMPLEX SUBUNIT RUVB"/>
    <property type="match status" value="1"/>
</dbReference>
<dbReference type="Pfam" id="PF17864">
    <property type="entry name" value="AAA_lid_4"/>
    <property type="match status" value="1"/>
</dbReference>
<dbReference type="Pfam" id="PF05491">
    <property type="entry name" value="RuvB_C"/>
    <property type="match status" value="1"/>
</dbReference>
<dbReference type="Pfam" id="PF05496">
    <property type="entry name" value="RuvB_N"/>
    <property type="match status" value="1"/>
</dbReference>
<dbReference type="SMART" id="SM00382">
    <property type="entry name" value="AAA"/>
    <property type="match status" value="1"/>
</dbReference>
<dbReference type="SUPFAM" id="SSF52540">
    <property type="entry name" value="P-loop containing nucleoside triphosphate hydrolases"/>
    <property type="match status" value="1"/>
</dbReference>
<dbReference type="SUPFAM" id="SSF46785">
    <property type="entry name" value="Winged helix' DNA-binding domain"/>
    <property type="match status" value="1"/>
</dbReference>
<accession>A6KZW5</accession>
<comment type="function">
    <text evidence="1">The RuvA-RuvB-RuvC complex processes Holliday junction (HJ) DNA during genetic recombination and DNA repair, while the RuvA-RuvB complex plays an important role in the rescue of blocked DNA replication forks via replication fork reversal (RFR). RuvA specifically binds to HJ cruciform DNA, conferring on it an open structure. The RuvB hexamer acts as an ATP-dependent pump, pulling dsDNA into and through the RuvAB complex. RuvB forms 2 homohexamers on either side of HJ DNA bound by 1 or 2 RuvA tetramers; 4 subunits per hexamer contact DNA at a time. Coordinated motions by a converter formed by DNA-disengaged RuvB subunits stimulates ATP hydrolysis and nucleotide exchange. Immobilization of the converter enables RuvB to convert the ATP-contained energy into a lever motion, pulling 2 nucleotides of DNA out of the RuvA tetramer per ATP hydrolyzed, thus driving DNA branch migration. The RuvB motors rotate together with the DNA substrate, which together with the progressing nucleotide cycle form the mechanistic basis for DNA recombination by continuous HJ branch migration. Branch migration allows RuvC to scan DNA until it finds its consensus sequence, where it cleaves and resolves cruciform DNA.</text>
</comment>
<comment type="catalytic activity">
    <reaction evidence="1">
        <text>ATP + H2O = ADP + phosphate + H(+)</text>
        <dbReference type="Rhea" id="RHEA:13065"/>
        <dbReference type="ChEBI" id="CHEBI:15377"/>
        <dbReference type="ChEBI" id="CHEBI:15378"/>
        <dbReference type="ChEBI" id="CHEBI:30616"/>
        <dbReference type="ChEBI" id="CHEBI:43474"/>
        <dbReference type="ChEBI" id="CHEBI:456216"/>
    </reaction>
</comment>
<comment type="subunit">
    <text evidence="1">Homohexamer. Forms an RuvA(8)-RuvB(12)-Holliday junction (HJ) complex. HJ DNA is sandwiched between 2 RuvA tetramers; dsDNA enters through RuvA and exits via RuvB. An RuvB hexamer assembles on each DNA strand where it exits the tetramer. Each RuvB hexamer is contacted by two RuvA subunits (via domain III) on 2 adjacent RuvB subunits; this complex drives branch migration. In the full resolvosome a probable DNA-RuvA(4)-RuvB(12)-RuvC(2) complex forms which resolves the HJ.</text>
</comment>
<comment type="subcellular location">
    <subcellularLocation>
        <location evidence="1">Cytoplasm</location>
    </subcellularLocation>
</comment>
<comment type="domain">
    <text evidence="1">Has 3 domains, the large (RuvB-L) and small ATPase (RuvB-S) domains and the C-terminal head (RuvB-H) domain. The head domain binds DNA, while the ATPase domains jointly bind ATP, ADP or are empty depending on the state of the subunit in the translocation cycle. During a single DNA translocation step the structure of each domain remains the same, but their relative positions change.</text>
</comment>
<comment type="similarity">
    <text evidence="1">Belongs to the RuvB family.</text>
</comment>
<protein>
    <recommendedName>
        <fullName evidence="1">Holliday junction branch migration complex subunit RuvB</fullName>
        <ecNumber evidence="1">3.6.4.-</ecNumber>
    </recommendedName>
</protein>
<name>RUVB_PHOV8</name>
<reference key="1">
    <citation type="journal article" date="2007" name="PLoS Biol.">
        <title>Evolution of symbiotic bacteria in the distal human intestine.</title>
        <authorList>
            <person name="Xu J."/>
            <person name="Mahowald M.A."/>
            <person name="Ley R.E."/>
            <person name="Lozupone C.A."/>
            <person name="Hamady M."/>
            <person name="Martens E.C."/>
            <person name="Henrissat B."/>
            <person name="Coutinho P.M."/>
            <person name="Minx P."/>
            <person name="Latreille P."/>
            <person name="Cordum H."/>
            <person name="Van Brunt A."/>
            <person name="Kim K."/>
            <person name="Fulton R.S."/>
            <person name="Fulton L.A."/>
            <person name="Clifton S.W."/>
            <person name="Wilson R.K."/>
            <person name="Knight R.D."/>
            <person name="Gordon J.I."/>
        </authorList>
    </citation>
    <scope>NUCLEOTIDE SEQUENCE [LARGE SCALE GENOMIC DNA]</scope>
    <source>
        <strain>ATCC 8482 / DSM 1447 / JCM 5826 / CCUG 4940 / NBRC 14291 / NCTC 11154</strain>
    </source>
</reference>
<feature type="chain" id="PRO_1000001364" description="Holliday junction branch migration complex subunit RuvB">
    <location>
        <begin position="1"/>
        <end position="342"/>
    </location>
</feature>
<feature type="region of interest" description="Large ATPase domain (RuvB-L)" evidence="1">
    <location>
        <begin position="1"/>
        <end position="184"/>
    </location>
</feature>
<feature type="region of interest" description="Small ATPAse domain (RuvB-S)" evidence="1">
    <location>
        <begin position="185"/>
        <end position="255"/>
    </location>
</feature>
<feature type="region of interest" description="Head domain (RuvB-H)" evidence="1">
    <location>
        <begin position="258"/>
        <end position="342"/>
    </location>
</feature>
<feature type="binding site" evidence="1">
    <location>
        <position position="23"/>
    </location>
    <ligand>
        <name>ATP</name>
        <dbReference type="ChEBI" id="CHEBI:30616"/>
    </ligand>
</feature>
<feature type="binding site" evidence="1">
    <location>
        <position position="24"/>
    </location>
    <ligand>
        <name>ATP</name>
        <dbReference type="ChEBI" id="CHEBI:30616"/>
    </ligand>
</feature>
<feature type="binding site" evidence="1">
    <location>
        <position position="65"/>
    </location>
    <ligand>
        <name>ATP</name>
        <dbReference type="ChEBI" id="CHEBI:30616"/>
    </ligand>
</feature>
<feature type="binding site" evidence="1">
    <location>
        <position position="68"/>
    </location>
    <ligand>
        <name>ATP</name>
        <dbReference type="ChEBI" id="CHEBI:30616"/>
    </ligand>
</feature>
<feature type="binding site" evidence="1">
    <location>
        <position position="69"/>
    </location>
    <ligand>
        <name>ATP</name>
        <dbReference type="ChEBI" id="CHEBI:30616"/>
    </ligand>
</feature>
<feature type="binding site" evidence="1">
    <location>
        <position position="69"/>
    </location>
    <ligand>
        <name>Mg(2+)</name>
        <dbReference type="ChEBI" id="CHEBI:18420"/>
    </ligand>
</feature>
<feature type="binding site" evidence="1">
    <location>
        <position position="70"/>
    </location>
    <ligand>
        <name>ATP</name>
        <dbReference type="ChEBI" id="CHEBI:30616"/>
    </ligand>
</feature>
<feature type="binding site" evidence="1">
    <location>
        <begin position="131"/>
        <end position="133"/>
    </location>
    <ligand>
        <name>ATP</name>
        <dbReference type="ChEBI" id="CHEBI:30616"/>
    </ligand>
</feature>
<feature type="binding site" evidence="1">
    <location>
        <position position="174"/>
    </location>
    <ligand>
        <name>ATP</name>
        <dbReference type="ChEBI" id="CHEBI:30616"/>
    </ligand>
</feature>
<feature type="binding site" evidence="1">
    <location>
        <position position="184"/>
    </location>
    <ligand>
        <name>ATP</name>
        <dbReference type="ChEBI" id="CHEBI:30616"/>
    </ligand>
</feature>
<feature type="binding site" evidence="1">
    <location>
        <position position="221"/>
    </location>
    <ligand>
        <name>ATP</name>
        <dbReference type="ChEBI" id="CHEBI:30616"/>
    </ligand>
</feature>
<feature type="binding site" evidence="1">
    <location>
        <position position="313"/>
    </location>
    <ligand>
        <name>DNA</name>
        <dbReference type="ChEBI" id="CHEBI:16991"/>
    </ligand>
</feature>
<feature type="binding site" evidence="1">
    <location>
        <position position="318"/>
    </location>
    <ligand>
        <name>DNA</name>
        <dbReference type="ChEBI" id="CHEBI:16991"/>
    </ligand>
</feature>